<comment type="function">
    <text evidence="1">Plays a central role in hair and nail formation. Essential component of keratin intermediate filaments in the companion layer of the hair follicle (By similarity).</text>
</comment>
<comment type="subunit">
    <text evidence="1">Heterodimer of a type I and a type II keratin. May associate with KRT17.</text>
</comment>
<comment type="miscellaneous">
    <text>There are two types of cytoskeletal and microfibrillar keratin, I (acidic) and II (neutral to basic) (40-55 and 56-70 kDa, respectively).</text>
</comment>
<comment type="similarity">
    <text evidence="2">Belongs to the intermediate filament family.</text>
</comment>
<dbReference type="EMBL" id="BC123881">
    <property type="protein sequence ID" value="AAI23882.1"/>
    <property type="molecule type" value="mRNA"/>
</dbReference>
<dbReference type="RefSeq" id="NP_001070385.1">
    <property type="nucleotide sequence ID" value="NM_001076917.1"/>
</dbReference>
<dbReference type="SMR" id="Q08D91"/>
<dbReference type="FunCoup" id="Q08D91">
    <property type="interactions" value="37"/>
</dbReference>
<dbReference type="IntAct" id="Q08D91">
    <property type="interactions" value="1"/>
</dbReference>
<dbReference type="STRING" id="9913.ENSBTAP00000038262"/>
<dbReference type="PaxDb" id="9913-ENSBTAP00000038262"/>
<dbReference type="PeptideAtlas" id="Q08D91"/>
<dbReference type="GeneID" id="539683"/>
<dbReference type="KEGG" id="bta:539683"/>
<dbReference type="CTD" id="9119"/>
<dbReference type="VEuPathDB" id="HostDB:ENSBTAG00000016121"/>
<dbReference type="eggNOG" id="ENOG502RTYA">
    <property type="taxonomic scope" value="Eukaryota"/>
</dbReference>
<dbReference type="HOGENOM" id="CLU_012560_6_1_1"/>
<dbReference type="InParanoid" id="Q08D91"/>
<dbReference type="OMA" id="SIKKQCS"/>
<dbReference type="OrthoDB" id="2441647at2759"/>
<dbReference type="TreeFam" id="TF317854"/>
<dbReference type="Reactome" id="R-BTA-6805567">
    <property type="pathway name" value="Keratinization"/>
</dbReference>
<dbReference type="Reactome" id="R-BTA-6809371">
    <property type="pathway name" value="Formation of the cornified envelope"/>
</dbReference>
<dbReference type="Proteomes" id="UP000009136">
    <property type="component" value="Chromosome 5"/>
</dbReference>
<dbReference type="Bgee" id="ENSBTAG00000016121">
    <property type="expression patterns" value="Expressed in zone of skin and 21 other cell types or tissues"/>
</dbReference>
<dbReference type="GO" id="GO:0045095">
    <property type="term" value="C:keratin filament"/>
    <property type="evidence" value="ECO:0000318"/>
    <property type="project" value="GO_Central"/>
</dbReference>
<dbReference type="GO" id="GO:0030280">
    <property type="term" value="F:structural constituent of skin epidermis"/>
    <property type="evidence" value="ECO:0000318"/>
    <property type="project" value="GO_Central"/>
</dbReference>
<dbReference type="GO" id="GO:0045109">
    <property type="term" value="P:intermediate filament organization"/>
    <property type="evidence" value="ECO:0000318"/>
    <property type="project" value="GO_Central"/>
</dbReference>
<dbReference type="GO" id="GO:0031424">
    <property type="term" value="P:keratinization"/>
    <property type="evidence" value="ECO:0000318"/>
    <property type="project" value="GO_Central"/>
</dbReference>
<dbReference type="FunFam" id="1.20.5.1160:FF:000001">
    <property type="entry name" value="Keratin type II"/>
    <property type="match status" value="1"/>
</dbReference>
<dbReference type="FunFam" id="1.20.5.170:FF:000004">
    <property type="entry name" value="Keratin, type II cytoskeletal 5"/>
    <property type="match status" value="1"/>
</dbReference>
<dbReference type="FunFam" id="1.20.5.500:FF:000001">
    <property type="entry name" value="Type II keratin 23"/>
    <property type="match status" value="1"/>
</dbReference>
<dbReference type="Gene3D" id="1.20.5.170">
    <property type="match status" value="1"/>
</dbReference>
<dbReference type="Gene3D" id="1.20.5.500">
    <property type="entry name" value="Single helix bin"/>
    <property type="match status" value="1"/>
</dbReference>
<dbReference type="Gene3D" id="1.20.5.1160">
    <property type="entry name" value="Vasodilator-stimulated phosphoprotein"/>
    <property type="match status" value="1"/>
</dbReference>
<dbReference type="InterPro" id="IPR018039">
    <property type="entry name" value="IF_conserved"/>
</dbReference>
<dbReference type="InterPro" id="IPR039008">
    <property type="entry name" value="IF_rod_dom"/>
</dbReference>
<dbReference type="InterPro" id="IPR032444">
    <property type="entry name" value="Keratin_2_head"/>
</dbReference>
<dbReference type="InterPro" id="IPR003054">
    <property type="entry name" value="Keratin_II"/>
</dbReference>
<dbReference type="PANTHER" id="PTHR45616">
    <property type="entry name" value="GATA-TYPE DOMAIN-CONTAINING PROTEIN"/>
    <property type="match status" value="1"/>
</dbReference>
<dbReference type="PANTHER" id="PTHR45616:SF13">
    <property type="entry name" value="KERATIN, TYPE II CYTOSKELETAL 75"/>
    <property type="match status" value="1"/>
</dbReference>
<dbReference type="Pfam" id="PF00038">
    <property type="entry name" value="Filament"/>
    <property type="match status" value="1"/>
</dbReference>
<dbReference type="Pfam" id="PF16208">
    <property type="entry name" value="Keratin_2_head"/>
    <property type="match status" value="1"/>
</dbReference>
<dbReference type="PRINTS" id="PR01276">
    <property type="entry name" value="TYPE2KERATIN"/>
</dbReference>
<dbReference type="SMART" id="SM01391">
    <property type="entry name" value="Filament"/>
    <property type="match status" value="1"/>
</dbReference>
<dbReference type="SUPFAM" id="SSF64593">
    <property type="entry name" value="Intermediate filament protein, coiled coil region"/>
    <property type="match status" value="3"/>
</dbReference>
<dbReference type="PROSITE" id="PS00226">
    <property type="entry name" value="IF_ROD_1"/>
    <property type="match status" value="1"/>
</dbReference>
<dbReference type="PROSITE" id="PS51842">
    <property type="entry name" value="IF_ROD_2"/>
    <property type="match status" value="1"/>
</dbReference>
<keyword id="KW-0175">Coiled coil</keyword>
<keyword id="KW-0403">Intermediate filament</keyword>
<keyword id="KW-0416">Keratin</keyword>
<keyword id="KW-1185">Reference proteome</keyword>
<proteinExistence type="evidence at transcript level"/>
<organism>
    <name type="scientific">Bos taurus</name>
    <name type="common">Bovine</name>
    <dbReference type="NCBI Taxonomy" id="9913"/>
    <lineage>
        <taxon>Eukaryota</taxon>
        <taxon>Metazoa</taxon>
        <taxon>Chordata</taxon>
        <taxon>Craniata</taxon>
        <taxon>Vertebrata</taxon>
        <taxon>Euteleostomi</taxon>
        <taxon>Mammalia</taxon>
        <taxon>Eutheria</taxon>
        <taxon>Laurasiatheria</taxon>
        <taxon>Artiodactyla</taxon>
        <taxon>Ruminantia</taxon>
        <taxon>Pecora</taxon>
        <taxon>Bovidae</taxon>
        <taxon>Bovinae</taxon>
        <taxon>Bos</taxon>
    </lineage>
</organism>
<feature type="chain" id="PRO_0000314886" description="Keratin, type II cytoskeletal 75">
    <location>
        <begin position="1"/>
        <end position="543"/>
    </location>
</feature>
<feature type="domain" description="IF rod" evidence="2">
    <location>
        <begin position="145"/>
        <end position="458"/>
    </location>
</feature>
<feature type="region of interest" description="Head">
    <location>
        <begin position="1"/>
        <end position="144"/>
    </location>
</feature>
<feature type="region of interest" description="Disordered" evidence="3">
    <location>
        <begin position="1"/>
        <end position="48"/>
    </location>
</feature>
<feature type="region of interest" description="Coil 1A">
    <location>
        <begin position="145"/>
        <end position="180"/>
    </location>
</feature>
<feature type="region of interest" description="Linker 1">
    <location>
        <begin position="181"/>
        <end position="199"/>
    </location>
</feature>
<feature type="region of interest" description="Coil 1B">
    <location>
        <begin position="200"/>
        <end position="292"/>
    </location>
</feature>
<feature type="region of interest" description="Linker 12">
    <location>
        <begin position="293"/>
        <end position="315"/>
    </location>
</feature>
<feature type="region of interest" description="Coil 2">
    <location>
        <begin position="316"/>
        <end position="454"/>
    </location>
</feature>
<feature type="region of interest" description="Tail">
    <location>
        <begin position="455"/>
        <end position="543"/>
    </location>
</feature>
<feature type="region of interest" description="Disordered" evidence="3">
    <location>
        <begin position="511"/>
        <end position="543"/>
    </location>
</feature>
<feature type="compositionally biased region" description="Polar residues" evidence="3">
    <location>
        <begin position="1"/>
        <end position="16"/>
    </location>
</feature>
<feature type="compositionally biased region" description="Low complexity" evidence="3">
    <location>
        <begin position="17"/>
        <end position="36"/>
    </location>
</feature>
<feature type="compositionally biased region" description="Low complexity" evidence="3">
    <location>
        <begin position="526"/>
        <end position="543"/>
    </location>
</feature>
<feature type="site" description="Stutter">
    <location>
        <position position="396"/>
    </location>
</feature>
<accession>Q08D91</accession>
<reference key="1">
    <citation type="submission" date="2006-09" db="EMBL/GenBank/DDBJ databases">
        <authorList>
            <consortium name="NIH - Mammalian Gene Collection (MGC) project"/>
        </authorList>
    </citation>
    <scope>NUCLEOTIDE SEQUENCE [LARGE SCALE MRNA]</scope>
    <source>
        <strain>Hereford</strain>
        <tissue>Fetal skin</tissue>
    </source>
</reference>
<name>K2C75_BOVIN</name>
<gene>
    <name type="primary">KRT75</name>
</gene>
<evidence type="ECO:0000250" key="1"/>
<evidence type="ECO:0000255" key="2">
    <source>
        <dbReference type="PROSITE-ProRule" id="PRU01188"/>
    </source>
</evidence>
<evidence type="ECO:0000256" key="3">
    <source>
        <dbReference type="SAM" id="MobiDB-lite"/>
    </source>
</evidence>
<protein>
    <recommendedName>
        <fullName>Keratin, type II cytoskeletal 75</fullName>
    </recommendedName>
    <alternativeName>
        <fullName>Cytokeratin-75</fullName>
        <shortName>CK-75</shortName>
    </alternativeName>
    <alternativeName>
        <fullName>Keratin-6 hair follicle</fullName>
    </alternativeName>
    <alternativeName>
        <fullName>Keratin-75</fullName>
        <shortName>K75</shortName>
    </alternativeName>
    <alternativeName>
        <fullName>Type II keratin-K6hf</fullName>
    </alternativeName>
    <alternativeName>
        <fullName>Type-II keratin Kb18</fullName>
    </alternativeName>
</protein>
<sequence>MSRQSTITFQTSSRRGFSTASATTPATSRSRFSSASVTHSPAGSGGLGRISGFGSRSLYNLGGTKRVSISGCGSNFRSGFGGRASSGFGVSGGFGYGGGIGGGHGGCGFSVCPPGGIQEVTVNQSLLTPLNLQIDPNIQRVRKEEREQIKTLNNKFASFIDKVRFLEQQNKVLETKWSLLQEQGTRTVRQSLEPFFEAYITDLRRQLDSITTERGRLDAELRTMQDVVEDFKVRYEDEINKRTAAENEFVALKKDVDAAYLNKVDLEAKANSLTDEINFLQMLFEAELCQMQTRVSDTSVVLSMDNNRSLDLDSIIAEVKAQYEEIANRSRAEAESWYQTKYEELQVTAGQHGDDLRNTKQEISETNRMIQRLRAEIDNVKKQCASLQTAIADAEQRGELALKDARAKLVDLEEALQKSKQDMARLLREYQELMNIKLALDVEIATYRKLLEGEECRLSGEGVSPVNISVVTSTVSSGYGGGSSIGSGSLGLSGGSGCSFMTSGGHSLGGSSFSNSSSRGLGGSGSSFKFVSTTSSSRKSYKH</sequence>